<dbReference type="EMBL" id="CP000611">
    <property type="protein sequence ID" value="ABQ72171.1"/>
    <property type="molecule type" value="Genomic_DNA"/>
</dbReference>
<dbReference type="RefSeq" id="WP_003402246.1">
    <property type="nucleotide sequence ID" value="NZ_CP016972.1"/>
</dbReference>
<dbReference type="SMR" id="A5TZH1"/>
<dbReference type="KEGG" id="mra:MRA_0450"/>
<dbReference type="eggNOG" id="COG1595">
    <property type="taxonomic scope" value="Bacteria"/>
</dbReference>
<dbReference type="HOGENOM" id="CLU_047691_9_3_11"/>
<dbReference type="Proteomes" id="UP000001988">
    <property type="component" value="Chromosome"/>
</dbReference>
<dbReference type="GO" id="GO:0003677">
    <property type="term" value="F:DNA binding"/>
    <property type="evidence" value="ECO:0007669"/>
    <property type="project" value="UniProtKB-KW"/>
</dbReference>
<dbReference type="GO" id="GO:0016987">
    <property type="term" value="F:sigma factor activity"/>
    <property type="evidence" value="ECO:0007669"/>
    <property type="project" value="UniProtKB-KW"/>
</dbReference>
<dbReference type="GO" id="GO:0006352">
    <property type="term" value="P:DNA-templated transcription initiation"/>
    <property type="evidence" value="ECO:0007669"/>
    <property type="project" value="InterPro"/>
</dbReference>
<dbReference type="CDD" id="cd06171">
    <property type="entry name" value="Sigma70_r4"/>
    <property type="match status" value="1"/>
</dbReference>
<dbReference type="FunFam" id="1.10.1740.10:FF:000021">
    <property type="entry name" value="ECF RNA polymerase sigma factor SigK"/>
    <property type="match status" value="1"/>
</dbReference>
<dbReference type="Gene3D" id="1.10.1740.10">
    <property type="match status" value="1"/>
</dbReference>
<dbReference type="Gene3D" id="1.10.10.10">
    <property type="entry name" value="Winged helix-like DNA-binding domain superfamily/Winged helix DNA-binding domain"/>
    <property type="match status" value="1"/>
</dbReference>
<dbReference type="InterPro" id="IPR039425">
    <property type="entry name" value="RNA_pol_sigma-70-like"/>
</dbReference>
<dbReference type="InterPro" id="IPR014284">
    <property type="entry name" value="RNA_pol_sigma-70_dom"/>
</dbReference>
<dbReference type="InterPro" id="IPR007627">
    <property type="entry name" value="RNA_pol_sigma70_r2"/>
</dbReference>
<dbReference type="InterPro" id="IPR007630">
    <property type="entry name" value="RNA_pol_sigma70_r4"/>
</dbReference>
<dbReference type="InterPro" id="IPR013325">
    <property type="entry name" value="RNA_pol_sigma_r2"/>
</dbReference>
<dbReference type="InterPro" id="IPR013324">
    <property type="entry name" value="RNA_pol_sigma_r3/r4-like"/>
</dbReference>
<dbReference type="InterPro" id="IPR036388">
    <property type="entry name" value="WH-like_DNA-bd_sf"/>
</dbReference>
<dbReference type="NCBIfam" id="NF007228">
    <property type="entry name" value="PRK09646.1"/>
    <property type="match status" value="1"/>
</dbReference>
<dbReference type="NCBIfam" id="TIGR02937">
    <property type="entry name" value="sigma70-ECF"/>
    <property type="match status" value="1"/>
</dbReference>
<dbReference type="PANTHER" id="PTHR43133:SF66">
    <property type="entry name" value="ECF RNA POLYMERASE SIGMA FACTOR SIGK"/>
    <property type="match status" value="1"/>
</dbReference>
<dbReference type="PANTHER" id="PTHR43133">
    <property type="entry name" value="RNA POLYMERASE ECF-TYPE SIGMA FACTO"/>
    <property type="match status" value="1"/>
</dbReference>
<dbReference type="Pfam" id="PF04542">
    <property type="entry name" value="Sigma70_r2"/>
    <property type="match status" value="1"/>
</dbReference>
<dbReference type="Pfam" id="PF04545">
    <property type="entry name" value="Sigma70_r4"/>
    <property type="match status" value="1"/>
</dbReference>
<dbReference type="SUPFAM" id="SSF88946">
    <property type="entry name" value="Sigma2 domain of RNA polymerase sigma factors"/>
    <property type="match status" value="1"/>
</dbReference>
<dbReference type="SUPFAM" id="SSF88659">
    <property type="entry name" value="Sigma3 and sigma4 domains of RNA polymerase sigma factors"/>
    <property type="match status" value="1"/>
</dbReference>
<name>SIGK_MYCTA</name>
<keyword id="KW-0238">DNA-binding</keyword>
<keyword id="KW-1185">Reference proteome</keyword>
<keyword id="KW-0731">Sigma factor</keyword>
<keyword id="KW-0804">Transcription</keyword>
<keyword id="KW-0805">Transcription regulation</keyword>
<proteinExistence type="inferred from homology"/>
<evidence type="ECO:0000250" key="1"/>
<evidence type="ECO:0000305" key="2"/>
<feature type="chain" id="PRO_0000313844" description="ECF RNA polymerase sigma factor SigK">
    <location>
        <begin position="1"/>
        <end position="187"/>
    </location>
</feature>
<feature type="DNA-binding region" description="H-T-H motif" evidence="1">
    <location>
        <begin position="155"/>
        <end position="174"/>
    </location>
</feature>
<feature type="region of interest" description="Sigma-70 factor domain-2">
    <location>
        <begin position="30"/>
        <end position="96"/>
    </location>
</feature>
<feature type="region of interest" description="Sigma-70 factor domain-4">
    <location>
        <begin position="133"/>
        <end position="182"/>
    </location>
</feature>
<feature type="short sequence motif" description="Interaction with polymerase core subunit RpoC">
    <location>
        <begin position="53"/>
        <end position="56"/>
    </location>
</feature>
<reference key="1">
    <citation type="journal article" date="2008" name="PLoS ONE">
        <title>Genetic basis of virulence attenuation revealed by comparative genomic analysis of Mycobacterium tuberculosis strain H37Ra versus H37Rv.</title>
        <authorList>
            <person name="Zheng H."/>
            <person name="Lu L."/>
            <person name="Wang B."/>
            <person name="Pu S."/>
            <person name="Zhang X."/>
            <person name="Zhu G."/>
            <person name="Shi W."/>
            <person name="Zhang L."/>
            <person name="Wang H."/>
            <person name="Wang S."/>
            <person name="Zhao G."/>
            <person name="Zhang Y."/>
        </authorList>
    </citation>
    <scope>NUCLEOTIDE SEQUENCE [LARGE SCALE GENOMIC DNA]</scope>
    <source>
        <strain>ATCC 25177 / H37Ra</strain>
    </source>
</reference>
<accession>A5TZH1</accession>
<protein>
    <recommendedName>
        <fullName>ECF RNA polymerase sigma factor SigK</fullName>
        <shortName>ECF sigma factor SigK</shortName>
    </recommendedName>
    <alternativeName>
        <fullName>Alternative RNA polymerase sigma factor SigK</fullName>
    </alternativeName>
    <alternativeName>
        <fullName>RNA polymerase sigma-K factor</fullName>
        <shortName>Sigma-K factor</shortName>
    </alternativeName>
</protein>
<organism>
    <name type="scientific">Mycobacterium tuberculosis (strain ATCC 25177 / H37Ra)</name>
    <dbReference type="NCBI Taxonomy" id="419947"/>
    <lineage>
        <taxon>Bacteria</taxon>
        <taxon>Bacillati</taxon>
        <taxon>Actinomycetota</taxon>
        <taxon>Actinomycetes</taxon>
        <taxon>Mycobacteriales</taxon>
        <taxon>Mycobacteriaceae</taxon>
        <taxon>Mycobacterium</taxon>
        <taxon>Mycobacterium tuberculosis complex</taxon>
    </lineage>
</organism>
<comment type="function">
    <text evidence="1">Sigma factors are initiation factors that promote the attachment of RNA polymerase to specific initiation sites and are then released. Extracytoplasmic function (ECF) sigma factors are held in an inactive form by an anti-sigma factor until released by regulated intramembrane proteolysis (By similarity).</text>
</comment>
<comment type="subunit">
    <text evidence="1">Interacts transiently with the RNA polymerase catalytic core formed by RpoA, RpoB, RpoC and RpoZ (2 alpha, 1 beta, 1 beta' and 1 omega subunit) to form the RNA polymerase holoenzyme that can initiate transcription. Interacts (via sigma-70 factor domain 4) with anti-sigma-K factor RskA (By similarity).</text>
</comment>
<comment type="domain">
    <text evidence="1">The sigma-70 factor domain-2 mediates sequence-specific interaction with the -10 element in promoter DNA, and plays an important role in melting the double-stranded DNA and the formation of the transcription bubble. The sigma-70 factor domain-2 mediates interaction with the RNA polymerase subunits RpoB and RpoC (By similarity).</text>
</comment>
<comment type="domain">
    <text evidence="1">The sigma-70 factor domain-4 contains a helix-turn-helix (H-T-H) motif that mediates interaction with the -35 element in promoter DNA. The domain also mediates interaction with the RNA polymerase subunit RpoA. Interactions between sigma-70 factor domain-4 and anti-sigma factors prevents interaction of sigma factors with the RNA polymerase catalytic core (By similarity).</text>
</comment>
<comment type="miscellaneous">
    <text evidence="1">Extracytoplasmic function (ECF) sigma factors are held in an inactive form by an anti-sigma factor until released by regulated intramembrane proteolysis (RIP). RIP occurs when an extracytoplasmic signal triggers a concerted proteolytic cascade to transmit information and elicit cellular responses. The membrane-spanning anti-sigma factor is first cut extracytoplasmically (site-1 protease, S1P), then within the membrane itself (site-2 protease, S2P, Rip1), while cytoplasmic proteases finish degrading the regulatory protein, liberating SigK (By similarity).</text>
</comment>
<comment type="similarity">
    <text evidence="2">Belongs to the sigma-70 factor family. ECF subfamily.</text>
</comment>
<gene>
    <name type="primary">sigK</name>
    <name type="ordered locus">MRA_0450</name>
</gene>
<sequence>MTGPPRLSSDLDALLRRVAGHDQAAFAEFYDHTKSRVYGLVMRVLRDTGYSEETTQEIYLEVWRNASEFDSAKGSALAWLLTMAHRRAVDRVRCEQAGNQREVRYGAANVDPASDVVADLAIAGDERRRVTECLKALTDTQRQCIELAYYGGLTYVEVSRRLAANLSTIKSRMRDALRSLRNCLDVS</sequence>